<accession>Q6R7L7</accession>
<sequence>MNPKDLTAVSKAISDLFYSKNEHIITVCSDYLRHWRDVVKQDDEVIVEKICSVCELENSCLTGEMITMFENVSVILPQDIFGVNVMFYIISRELEGTHSYHDLIRKLDPYSIFSHFILMDCSDANLKKEIDNATFFKNHYYKQKSGYVISNNNEESEEENEDLEDEECETVKKARKSSKKMPYMEGDDRIKSMGQTLGKWFEQNKTGCSKKDQTLLNYIQTQCTIANCGDLSLSITNRRMPTDSRKLVNWKWVANNTLYPKHGETLDDDMYGCCQVGAARCDYDNTLSELIDAVHNGRVKHSTVEMTKKKKADLLEVLMDPGKNNKKEDGDDPTLFFSINDMDQLLEGDDIIDMEEECEGDEDDVNAKGYDDLYDKKQKELYKKIETGMITVVRLHEMCNDLGIGDYFELILSATEFPCVICDLSILYEFRACFFDLINMSRMAASKVNLNRIKKPGKLFSKAIKNKTNAGCKPLVKGQFLGEKTELEITKRLDEVELTPKQLVDYSIFKCLGGGEDMMKTMAQLDKNNKMEDYGYNFFAEEISPPVLLRCMEGEWLDKFPFMRSIIDRIKDVALSHALPRKRIFCYINPRIMACECNIYETVRSRCLLGVKISLVNTMLKVMKRSQTKTILNQVSSICKEHGIAYEICNIHINKTMKEDKKIIKERLARKRSHPN</sequence>
<protein>
    <recommendedName>
        <fullName>Uncharacterized protein ORF6</fullName>
    </recommendedName>
</protein>
<organismHost>
    <name type="scientific">Magallana gigas</name>
    <name type="common">Pacific oyster</name>
    <name type="synonym">Crassostrea gigas</name>
    <dbReference type="NCBI Taxonomy" id="29159"/>
</organismHost>
<organismHost>
    <name type="scientific">Pecten maximus</name>
    <name type="common">King scallop</name>
    <name type="synonym">Pilgrim's clam</name>
    <dbReference type="NCBI Taxonomy" id="6579"/>
</organismHost>
<reference key="1">
    <citation type="journal article" date="2005" name="J. Gen. Virol.">
        <title>A novel class of herpesvirus with bivalve hosts.</title>
        <authorList>
            <person name="Davison A.J."/>
            <person name="Trus B.L."/>
            <person name="Cheng N."/>
            <person name="Steven A.C."/>
            <person name="Watson M.S."/>
            <person name="Cunningham C."/>
            <person name="Le Deuff R.M."/>
            <person name="Renault T."/>
        </authorList>
    </citation>
    <scope>NUCLEOTIDE SEQUENCE [LARGE SCALE GENOMIC DNA]</scope>
</reference>
<gene>
    <name type="ORF">ORF6</name>
</gene>
<proteinExistence type="predicted"/>
<dbReference type="EMBL" id="AY509253">
    <property type="protein sequence ID" value="AAS00898.1"/>
    <property type="molecule type" value="Genomic_DNA"/>
</dbReference>
<dbReference type="RefSeq" id="YP_024551.1">
    <property type="nucleotide sequence ID" value="NC_005881.2"/>
</dbReference>
<dbReference type="KEGG" id="vg:2948223"/>
<dbReference type="Proteomes" id="UP000007021">
    <property type="component" value="Segment"/>
</dbReference>
<keyword id="KW-1185">Reference proteome</keyword>
<organism>
    <name type="scientific">Ostreid herpesvirus 1 (isolate France)</name>
    <name type="common">OsHV-1</name>
    <name type="synonym">Pacific oyster herpesvirus</name>
    <dbReference type="NCBI Taxonomy" id="654903"/>
    <lineage>
        <taxon>Viruses</taxon>
        <taxon>Duplodnaviria</taxon>
        <taxon>Heunggongvirae</taxon>
        <taxon>Peploviricota</taxon>
        <taxon>Herviviricetes</taxon>
        <taxon>Herpesvirales</taxon>
        <taxon>Malacoherpesviridae</taxon>
        <taxon>Ostreavirus</taxon>
        <taxon>Ostreavirus ostreidmalaco1</taxon>
        <taxon>Ostreid herpesvirus 1</taxon>
    </lineage>
</organism>
<name>Y006_OSHVF</name>
<feature type="chain" id="PRO_0000385041" description="Uncharacterized protein ORF6">
    <location>
        <begin position="1"/>
        <end position="676"/>
    </location>
</feature>